<gene>
    <name evidence="1" type="primary">nhaP2</name>
    <name type="synonym">cvrA</name>
    <name type="ordered locus">SeHA_C1999</name>
</gene>
<dbReference type="EMBL" id="CP001120">
    <property type="protein sequence ID" value="ACF66640.1"/>
    <property type="molecule type" value="Genomic_DNA"/>
</dbReference>
<dbReference type="RefSeq" id="WP_000338386.1">
    <property type="nucleotide sequence ID" value="NC_011083.1"/>
</dbReference>
<dbReference type="SMR" id="B4TKD1"/>
<dbReference type="KEGG" id="seh:SeHA_C1999"/>
<dbReference type="HOGENOM" id="CLU_005912_9_2_6"/>
<dbReference type="Proteomes" id="UP000001866">
    <property type="component" value="Chromosome"/>
</dbReference>
<dbReference type="GO" id="GO:0005886">
    <property type="term" value="C:plasma membrane"/>
    <property type="evidence" value="ECO:0007669"/>
    <property type="project" value="UniProtKB-SubCell"/>
</dbReference>
<dbReference type="GO" id="GO:0050660">
    <property type="term" value="F:flavin adenine dinucleotide binding"/>
    <property type="evidence" value="ECO:0007669"/>
    <property type="project" value="InterPro"/>
</dbReference>
<dbReference type="GO" id="GO:0015386">
    <property type="term" value="F:potassium:proton antiporter activity"/>
    <property type="evidence" value="ECO:0007669"/>
    <property type="project" value="UniProtKB-UniRule"/>
</dbReference>
<dbReference type="GO" id="GO:0006884">
    <property type="term" value="P:cell volume homeostasis"/>
    <property type="evidence" value="ECO:0007669"/>
    <property type="project" value="InterPro"/>
</dbReference>
<dbReference type="FunFam" id="1.20.1530.20:FF:000002">
    <property type="entry name" value="K(+)/H(+) antiporter NhaP2"/>
    <property type="match status" value="1"/>
</dbReference>
<dbReference type="Gene3D" id="1.20.1530.20">
    <property type="match status" value="1"/>
</dbReference>
<dbReference type="Gene3D" id="3.30.465.10">
    <property type="match status" value="1"/>
</dbReference>
<dbReference type="Gene3D" id="3.30.70.1450">
    <property type="entry name" value="Regulator of K+ conductance, C-terminal domain"/>
    <property type="match status" value="1"/>
</dbReference>
<dbReference type="HAMAP" id="MF_01075">
    <property type="entry name" value="NhaP2"/>
    <property type="match status" value="1"/>
</dbReference>
<dbReference type="InterPro" id="IPR006153">
    <property type="entry name" value="Cation/H_exchanger_TM"/>
</dbReference>
<dbReference type="InterPro" id="IPR036318">
    <property type="entry name" value="FAD-bd_PCMH-like_sf"/>
</dbReference>
<dbReference type="InterPro" id="IPR016169">
    <property type="entry name" value="FAD-bd_PCMH_sub2"/>
</dbReference>
<dbReference type="InterPro" id="IPR038770">
    <property type="entry name" value="Na+/solute_symporter_sf"/>
</dbReference>
<dbReference type="InterPro" id="IPR023729">
    <property type="entry name" value="NhaP2"/>
</dbReference>
<dbReference type="InterPro" id="IPR006037">
    <property type="entry name" value="RCK_C"/>
</dbReference>
<dbReference type="InterPro" id="IPR036721">
    <property type="entry name" value="RCK_C_sf"/>
</dbReference>
<dbReference type="InterPro" id="IPR005170">
    <property type="entry name" value="Transptr-assoc_dom"/>
</dbReference>
<dbReference type="NCBIfam" id="NF003714">
    <property type="entry name" value="PRK05326.1-1"/>
    <property type="match status" value="1"/>
</dbReference>
<dbReference type="NCBIfam" id="NF003715">
    <property type="entry name" value="PRK05326.1-2"/>
    <property type="match status" value="1"/>
</dbReference>
<dbReference type="NCBIfam" id="NF003716">
    <property type="entry name" value="PRK05326.1-3"/>
    <property type="match status" value="1"/>
</dbReference>
<dbReference type="PANTHER" id="PTHR32507:SF7">
    <property type="entry name" value="K(+)_H(+) ANTIPORTER NHAP2"/>
    <property type="match status" value="1"/>
</dbReference>
<dbReference type="PANTHER" id="PTHR32507">
    <property type="entry name" value="NA(+)/H(+) ANTIPORTER 1"/>
    <property type="match status" value="1"/>
</dbReference>
<dbReference type="Pfam" id="PF03471">
    <property type="entry name" value="CorC_HlyC"/>
    <property type="match status" value="1"/>
</dbReference>
<dbReference type="Pfam" id="PF00999">
    <property type="entry name" value="Na_H_Exchanger"/>
    <property type="match status" value="1"/>
</dbReference>
<dbReference type="Pfam" id="PF02080">
    <property type="entry name" value="TrkA_C"/>
    <property type="match status" value="1"/>
</dbReference>
<dbReference type="SMART" id="SM01091">
    <property type="entry name" value="CorC_HlyC"/>
    <property type="match status" value="1"/>
</dbReference>
<dbReference type="SUPFAM" id="SSF56176">
    <property type="entry name" value="FAD-binding/transporter-associated domain-like"/>
    <property type="match status" value="1"/>
</dbReference>
<dbReference type="SUPFAM" id="SSF116726">
    <property type="entry name" value="TrkA C-terminal domain-like"/>
    <property type="match status" value="1"/>
</dbReference>
<dbReference type="PROSITE" id="PS51202">
    <property type="entry name" value="RCK_C"/>
    <property type="match status" value="1"/>
</dbReference>
<proteinExistence type="inferred from homology"/>
<evidence type="ECO:0000255" key="1">
    <source>
        <dbReference type="HAMAP-Rule" id="MF_01075"/>
    </source>
</evidence>
<sequence>MDAATIISLFILGSILVTSSILLSSFSSRLGIPILVIFLAIGMLAGVDGIGGIPFDNYPFTYMVSNLALAIILLDGGMRTQASSFRVALGPALSLATLGVLITSGLTGMMAAWLFHLDLIEGLLIGAIVGSTDAAAVFSLLGGKGLNERVGSTLEIESGSNDPMAVFLTITLIEMIQKHETGLDWMFAVHIIQQFGLGIVFGLGGGYLLQQMINRISLPSGLYPMLALSGGILIFALTTALEGSGILAVYLCGFLLGNRPIRNRYGILQNFDGLAWLAQIAMFLVLGLLVTPSDLWPIAVPALILSIWMIFFARPLSVFTGLLPFRGFNLRERIFISWVGLRGAVPIILAVFPMMAGLENARLFFNVAFFVVLVSLLLQGTSLSWAAKRAKVVVPPVGWPVSRVGLDIHPDNPWEQFIYQLSADKWCVGAALRDLHMPNETRIAALFRNNELFHPTGSTRLQEGDVLCVIGRERDLPALGKLFSQSPPVSLDQRFFGDFILEANAKFADVALIYGLEEGTEYRDKQQTLGEIIQQLLGAAPVVGDQVEFGGMIWTVAEKEDSVVHKIGVRVAEDEAE</sequence>
<name>NHAP2_SALHS</name>
<reference key="1">
    <citation type="journal article" date="2011" name="J. Bacteriol.">
        <title>Comparative genomics of 28 Salmonella enterica isolates: evidence for CRISPR-mediated adaptive sublineage evolution.</title>
        <authorList>
            <person name="Fricke W.F."/>
            <person name="Mammel M.K."/>
            <person name="McDermott P.F."/>
            <person name="Tartera C."/>
            <person name="White D.G."/>
            <person name="Leclerc J.E."/>
            <person name="Ravel J."/>
            <person name="Cebula T.A."/>
        </authorList>
    </citation>
    <scope>NUCLEOTIDE SEQUENCE [LARGE SCALE GENOMIC DNA]</scope>
    <source>
        <strain>SL476</strain>
    </source>
</reference>
<keyword id="KW-0050">Antiport</keyword>
<keyword id="KW-0997">Cell inner membrane</keyword>
<keyword id="KW-1003">Cell membrane</keyword>
<keyword id="KW-0406">Ion transport</keyword>
<keyword id="KW-0472">Membrane</keyword>
<keyword id="KW-0630">Potassium</keyword>
<keyword id="KW-0633">Potassium transport</keyword>
<keyword id="KW-0812">Transmembrane</keyword>
<keyword id="KW-1133">Transmembrane helix</keyword>
<keyword id="KW-0813">Transport</keyword>
<comment type="function">
    <text evidence="1">K(+)/H(+) antiporter that extrudes potassium in exchange for external protons and maintains the internal concentration of potassium under toxic levels.</text>
</comment>
<comment type="catalytic activity">
    <reaction evidence="1">
        <text>K(+)(in) + H(+)(out) = K(+)(out) + H(+)(in)</text>
        <dbReference type="Rhea" id="RHEA:29467"/>
        <dbReference type="ChEBI" id="CHEBI:15378"/>
        <dbReference type="ChEBI" id="CHEBI:29103"/>
    </reaction>
    <physiologicalReaction direction="left-to-right" evidence="1">
        <dbReference type="Rhea" id="RHEA:29468"/>
    </physiologicalReaction>
</comment>
<comment type="subcellular location">
    <subcellularLocation>
        <location evidence="1">Cell inner membrane</location>
        <topology evidence="1">Multi-pass membrane protein</topology>
    </subcellularLocation>
</comment>
<comment type="similarity">
    <text evidence="1">Belongs to the monovalent cation:proton antiporter 1 (CPA1) transporter (TC 2.A.36) family. NhaP2 subfamily.</text>
</comment>
<organism>
    <name type="scientific">Salmonella heidelberg (strain SL476)</name>
    <dbReference type="NCBI Taxonomy" id="454169"/>
    <lineage>
        <taxon>Bacteria</taxon>
        <taxon>Pseudomonadati</taxon>
        <taxon>Pseudomonadota</taxon>
        <taxon>Gammaproteobacteria</taxon>
        <taxon>Enterobacterales</taxon>
        <taxon>Enterobacteriaceae</taxon>
        <taxon>Salmonella</taxon>
    </lineage>
</organism>
<feature type="chain" id="PRO_1000136713" description="K(+)/H(+) antiporter NhaP2">
    <location>
        <begin position="1"/>
        <end position="577"/>
    </location>
</feature>
<feature type="transmembrane region" description="Helical" evidence="1">
    <location>
        <begin position="3"/>
        <end position="23"/>
    </location>
</feature>
<feature type="transmembrane region" description="Helical" evidence="1">
    <location>
        <begin position="30"/>
        <end position="50"/>
    </location>
</feature>
<feature type="transmembrane region" description="Helical" evidence="1">
    <location>
        <begin position="58"/>
        <end position="78"/>
    </location>
</feature>
<feature type="transmembrane region" description="Helical" evidence="1">
    <location>
        <begin position="87"/>
        <end position="107"/>
    </location>
</feature>
<feature type="transmembrane region" description="Helical" evidence="1">
    <location>
        <begin position="109"/>
        <end position="129"/>
    </location>
</feature>
<feature type="transmembrane region" description="Helical" evidence="1">
    <location>
        <begin position="185"/>
        <end position="205"/>
    </location>
</feature>
<feature type="transmembrane region" description="Helical" evidence="1">
    <location>
        <begin position="221"/>
        <end position="241"/>
    </location>
</feature>
<feature type="transmembrane region" description="Helical" evidence="1">
    <location>
        <begin position="271"/>
        <end position="291"/>
    </location>
</feature>
<feature type="transmembrane region" description="Helical" evidence="1">
    <location>
        <begin position="293"/>
        <end position="313"/>
    </location>
</feature>
<feature type="transmembrane region" description="Helical" evidence="1">
    <location>
        <begin position="334"/>
        <end position="354"/>
    </location>
</feature>
<feature type="transmembrane region" description="Helical" evidence="1">
    <location>
        <begin position="363"/>
        <end position="383"/>
    </location>
</feature>
<feature type="domain" description="RCK C-terminal" evidence="1">
    <location>
        <begin position="403"/>
        <end position="485"/>
    </location>
</feature>
<protein>
    <recommendedName>
        <fullName evidence="1">K(+)/H(+) antiporter NhaP2</fullName>
    </recommendedName>
    <alternativeName>
        <fullName evidence="1">Potassium/proton antiporter NhaP2</fullName>
    </alternativeName>
</protein>
<accession>B4TKD1</accession>